<accession>P9WG29</accession>
<accession>A0A2Z3DFM7</accession>
<accession>F2GHD1</accession>
<accession>L0T719</accession>
<accession>O05594</accession>
<accession>Q7D900</accession>
<organism>
    <name type="scientific">Mycobacterium tuberculosis (strain ATCC 25618 / H37Rv)</name>
    <dbReference type="NCBI Taxonomy" id="83332"/>
    <lineage>
        <taxon>Bacteria</taxon>
        <taxon>Bacillati</taxon>
        <taxon>Actinomycetota</taxon>
        <taxon>Actinomycetes</taxon>
        <taxon>Mycobacteriales</taxon>
        <taxon>Mycobacteriaceae</taxon>
        <taxon>Mycobacterium</taxon>
        <taxon>Mycobacterium tuberculosis complex</taxon>
    </lineage>
</organism>
<protein>
    <recommendedName>
        <fullName>Resuscitation-promoting factor RpfB</fullName>
        <ecNumber>3.-.-.-</ecNumber>
    </recommendedName>
</protein>
<gene>
    <name type="primary">rpfB</name>
    <name type="ordered locus">Rv1009</name>
    <name type="ORF">MTC1237.26</name>
</gene>
<comment type="function">
    <text>Factor that stimulates resuscitation of dormant cells. Has peptidoglycan (PG) hydrolytic activity. Active in the pM concentration range. Has little to no effect on actively-growing cells. PG fragments could either directly activate the resuscitation pathway of dormant bacteria or serve as a substrate for endogenous Rpf, resulting in low molecular weight products with resuscitation activity.</text>
</comment>
<comment type="function">
    <text>Reduces lag phase and enhances the growth of quiescent (1 month-old culture) M.tuberculosis; works best between 8 and 128 pM. Increases the number of bacteria that can be recovered from a 3 month-old culture. Stimulates growth of stationary phase M.bovis (a slowly-growing Mycobacterium) as well as M.smegmatis cells (a fast grower). Binds N,N',N''-triacetylchitotriose (tri-NAG). A fragment (residues 194-362) hydrolyzes an artificial lysozyme substrate 4-methylumbelliferyl-beta-D-N,N',N''-triacetylchitotrioside (MUF tri-NAG). By itself has little activity on cell wall, in combination with RipA is active against cell wall extracts from a number of Actinobacteria; this activity is inhibited by PBP1A (ponA1). Sequential gene disruption indicates RpfB and RpfE are higher than RpfD and RpfC in functional hierarchy.</text>
</comment>
<comment type="activity regulation">
    <text evidence="10 11">Activity on the artificial substrate MUF tri-NAG is inhibited by 2-nitrophenylthiocyanates (NPT) compounds. The synergistic effects on peptidoglycan degradation of RipA plus RpfB are inhibited by addition of PBP1A (ponA1).</text>
</comment>
<comment type="subunit">
    <text evidence="7 9 13">Monomer (Probable). Interacts with RipA.</text>
</comment>
<comment type="subcellular location">
    <subcellularLocation>
        <location evidence="1">Cell membrane</location>
        <topology evidence="1">Lipid-anchor</topology>
    </subcellularLocation>
    <text evidence="7">Localizes to the septa upon expression in M.smegmatis.</text>
</comment>
<comment type="induction">
    <text evidence="3">Expressed in actively growing cells.</text>
</comment>
<comment type="domain">
    <text>An expressed fragment (residues 194-362) hydrolyzes an artificial lysozyme substrate 4-methylumbelliferyl-beta-D-N,N',N''-triacetylchitotrioside (MUF tri-NAG).</text>
</comment>
<comment type="disruption phenotype">
    <text evidence="5 8">Not essential, disruption of rpfB alone has no effect on growth or survival in liquid culture, nor in mouse infection models, colonies plated over a 52-week culture period are visibly drier and more friable. Alterations in gene expression are seen. All 5 genes in this family can be deleted without affecting growth in culture, however triple deletion mutants (rpfA-rpfC-rpfB or rpfA-rpfC-rpfD) are not able to resuscitate spontaneously in the presence or absence of O(2), and are attenuated in a mouse infection model.</text>
</comment>
<comment type="biotechnology">
    <text evidence="4 12">A promising vaccine candidate, an rpfB-encoding DNA vaccine induces elevated cellular immune responses, confers modest but significant protection against intra-tracheal tuberculosis challenge in female C57BL/6 and BALB/c mice.</text>
</comment>
<comment type="miscellaneous">
    <text>Was identified as a high-confidence drug target.</text>
</comment>
<comment type="similarity">
    <text evidence="13">Belongs to the transglycosylase family. Rpf subfamily.</text>
</comment>
<name>RPFB_MYCTU</name>
<feature type="signal peptide" evidence="1">
    <location>
        <begin position="1"/>
        <end position="23"/>
    </location>
</feature>
<feature type="chain" id="PRO_0000421026" description="Resuscitation-promoting factor RpfB">
    <location>
        <begin position="24"/>
        <end position="362"/>
    </location>
</feature>
<feature type="domain" description="G5" evidence="2">
    <location>
        <begin position="192"/>
        <end position="272"/>
    </location>
</feature>
<feature type="lipid moiety-binding region" description="N-palmitoyl cysteine" evidence="1">
    <location>
        <position position="24"/>
    </location>
</feature>
<feature type="lipid moiety-binding region" description="S-diacylglycerol cysteine" evidence="1">
    <location>
        <position position="24"/>
    </location>
</feature>
<feature type="disulfide bond" evidence="6 9">
    <location>
        <begin position="291"/>
        <end position="355"/>
    </location>
</feature>
<feature type="strand" evidence="20">
    <location>
        <begin position="141"/>
        <end position="145"/>
    </location>
</feature>
<feature type="helix" evidence="20">
    <location>
        <begin position="159"/>
        <end position="165"/>
    </location>
</feature>
<feature type="strand" evidence="20">
    <location>
        <begin position="175"/>
        <end position="178"/>
    </location>
</feature>
<feature type="strand" evidence="20">
    <location>
        <begin position="188"/>
        <end position="193"/>
    </location>
</feature>
<feature type="strand" evidence="18">
    <location>
        <begin position="196"/>
        <end position="206"/>
    </location>
</feature>
<feature type="strand" evidence="18">
    <location>
        <begin position="210"/>
        <end position="215"/>
    </location>
</feature>
<feature type="strand" evidence="18">
    <location>
        <begin position="223"/>
        <end position="227"/>
    </location>
</feature>
<feature type="strand" evidence="18">
    <location>
        <begin position="232"/>
        <end position="243"/>
    </location>
</feature>
<feature type="strand" evidence="18">
    <location>
        <begin position="246"/>
        <end position="259"/>
    </location>
</feature>
<feature type="strand" evidence="18">
    <location>
        <begin position="264"/>
        <end position="269"/>
    </location>
</feature>
<feature type="helix" evidence="19">
    <location>
        <begin position="284"/>
        <end position="293"/>
    </location>
</feature>
<feature type="strand" evidence="19">
    <location>
        <begin position="302"/>
        <end position="304"/>
    </location>
</feature>
<feature type="turn" evidence="19">
    <location>
        <begin position="307"/>
        <end position="310"/>
    </location>
</feature>
<feature type="helix" evidence="19">
    <location>
        <begin position="313"/>
        <end position="318"/>
    </location>
</feature>
<feature type="helix" evidence="19">
    <location>
        <begin position="321"/>
        <end position="323"/>
    </location>
</feature>
<feature type="helix" evidence="19">
    <location>
        <begin position="328"/>
        <end position="330"/>
    </location>
</feature>
<feature type="helix" evidence="19">
    <location>
        <begin position="333"/>
        <end position="347"/>
    </location>
</feature>
<feature type="helix" evidence="19">
    <location>
        <begin position="349"/>
        <end position="351"/>
    </location>
</feature>
<feature type="helix" evidence="19">
    <location>
        <begin position="355"/>
        <end position="358"/>
    </location>
</feature>
<proteinExistence type="evidence at protein level"/>
<evidence type="ECO:0000255" key="1">
    <source>
        <dbReference type="PROSITE-ProRule" id="PRU00303"/>
    </source>
</evidence>
<evidence type="ECO:0000255" key="2">
    <source>
        <dbReference type="PROSITE-ProRule" id="PRU00437"/>
    </source>
</evidence>
<evidence type="ECO:0000269" key="3">
    <source>
    </source>
</evidence>
<evidence type="ECO:0000269" key="4">
    <source>
    </source>
</evidence>
<evidence type="ECO:0000269" key="5">
    <source>
    </source>
</evidence>
<evidence type="ECO:0000269" key="6">
    <source>
    </source>
</evidence>
<evidence type="ECO:0000269" key="7">
    <source>
    </source>
</evidence>
<evidence type="ECO:0000269" key="8">
    <source>
    </source>
</evidence>
<evidence type="ECO:0000269" key="9">
    <source>
    </source>
</evidence>
<evidence type="ECO:0000269" key="10">
    <source>
    </source>
</evidence>
<evidence type="ECO:0000269" key="11">
    <source>
    </source>
</evidence>
<evidence type="ECO:0000269" key="12">
    <source>
    </source>
</evidence>
<evidence type="ECO:0000305" key="13"/>
<evidence type="ECO:0000312" key="14">
    <source>
        <dbReference type="EMBL" id="AVY54108.1"/>
    </source>
</evidence>
<evidence type="ECO:0000312" key="15">
    <source>
        <dbReference type="EMBL" id="CCP43759.1"/>
    </source>
</evidence>
<evidence type="ECO:0007744" key="16">
    <source>
        <dbReference type="PDB" id="1XSF"/>
    </source>
</evidence>
<evidence type="ECO:0007744" key="17">
    <source>
        <dbReference type="PDB" id="3EO5"/>
    </source>
</evidence>
<evidence type="ECO:0007829" key="18">
    <source>
        <dbReference type="PDB" id="3EO5"/>
    </source>
</evidence>
<evidence type="ECO:0007829" key="19">
    <source>
        <dbReference type="PDB" id="4EMN"/>
    </source>
</evidence>
<evidence type="ECO:0007829" key="20">
    <source>
        <dbReference type="PDB" id="5E27"/>
    </source>
</evidence>
<keyword id="KW-0002">3D-structure</keyword>
<keyword id="KW-1003">Cell membrane</keyword>
<keyword id="KW-1015">Disulfide bond</keyword>
<keyword id="KW-0378">Hydrolase</keyword>
<keyword id="KW-0449">Lipoprotein</keyword>
<keyword id="KW-0472">Membrane</keyword>
<keyword id="KW-0564">Palmitate</keyword>
<keyword id="KW-1185">Reference proteome</keyword>
<keyword id="KW-0732">Signal</keyword>
<keyword id="KW-0843">Virulence</keyword>
<dbReference type="EC" id="3.-.-.-"/>
<dbReference type="EMBL" id="AL123456">
    <property type="protein sequence ID" value="CCP43759.1"/>
    <property type="molecule type" value="Genomic_DNA"/>
</dbReference>
<dbReference type="EMBL" id="KY702944">
    <property type="protein sequence ID" value="AVY54108.1"/>
    <property type="molecule type" value="Genomic_DNA"/>
</dbReference>
<dbReference type="PIR" id="D70603">
    <property type="entry name" value="D70603"/>
</dbReference>
<dbReference type="RefSeq" id="NP_215525.1">
    <property type="nucleotide sequence ID" value="NC_000962.3"/>
</dbReference>
<dbReference type="RefSeq" id="WP_003405187.1">
    <property type="nucleotide sequence ID" value="NC_000962.3"/>
</dbReference>
<dbReference type="PDB" id="1XSF">
    <property type="method" value="NMR"/>
    <property type="chains" value="A=255-362"/>
</dbReference>
<dbReference type="PDB" id="3EO5">
    <property type="method" value="X-ray"/>
    <property type="resolution" value="1.83 A"/>
    <property type="chains" value="A=194-362"/>
</dbReference>
<dbReference type="PDB" id="4EMN">
    <property type="method" value="X-ray"/>
    <property type="resolution" value="1.17 A"/>
    <property type="chains" value="A/B/C/D=282-362"/>
</dbReference>
<dbReference type="PDB" id="4KL7">
    <property type="method" value="X-ray"/>
    <property type="resolution" value="1.45 A"/>
    <property type="chains" value="A/B/C/D=283-362"/>
</dbReference>
<dbReference type="PDB" id="4KPM">
    <property type="method" value="X-ray"/>
    <property type="resolution" value="1.33 A"/>
    <property type="chains" value="A/B/C/D=283-362"/>
</dbReference>
<dbReference type="PDB" id="5E27">
    <property type="method" value="X-ray"/>
    <property type="resolution" value="2.60 A"/>
    <property type="chains" value="A/B=115-362"/>
</dbReference>
<dbReference type="PDBsum" id="1XSF"/>
<dbReference type="PDBsum" id="3EO5"/>
<dbReference type="PDBsum" id="4EMN"/>
<dbReference type="PDBsum" id="4KL7"/>
<dbReference type="PDBsum" id="4KPM"/>
<dbReference type="PDBsum" id="5E27"/>
<dbReference type="SMR" id="P9WG29"/>
<dbReference type="STRING" id="83332.Rv1009"/>
<dbReference type="PaxDb" id="83332-Rv1009"/>
<dbReference type="DNASU" id="886048"/>
<dbReference type="GeneID" id="886048"/>
<dbReference type="KEGG" id="mtu:Rv1009"/>
<dbReference type="KEGG" id="mtv:RVBD_1009"/>
<dbReference type="PATRIC" id="fig|83332.111.peg.1120"/>
<dbReference type="TubercuList" id="Rv1009"/>
<dbReference type="eggNOG" id="COG3583">
    <property type="taxonomic scope" value="Bacteria"/>
</dbReference>
<dbReference type="InParanoid" id="P9WG29"/>
<dbReference type="OrthoDB" id="1404170at2"/>
<dbReference type="PhylomeDB" id="P9WG29"/>
<dbReference type="EvolutionaryTrace" id="P9WG29"/>
<dbReference type="Proteomes" id="UP000001584">
    <property type="component" value="Chromosome"/>
</dbReference>
<dbReference type="GO" id="GO:0005576">
    <property type="term" value="C:extracellular region"/>
    <property type="evidence" value="ECO:0000314"/>
    <property type="project" value="MTBBASE"/>
</dbReference>
<dbReference type="GO" id="GO:0005886">
    <property type="term" value="C:plasma membrane"/>
    <property type="evidence" value="ECO:0007669"/>
    <property type="project" value="UniProtKB-SubCell"/>
</dbReference>
<dbReference type="GO" id="GO:0016787">
    <property type="term" value="F:hydrolase activity"/>
    <property type="evidence" value="ECO:0007669"/>
    <property type="project" value="UniProtKB-KW"/>
</dbReference>
<dbReference type="GO" id="GO:0085016">
    <property type="term" value="P:dormancy exit of symbiont in host"/>
    <property type="evidence" value="ECO:0000315"/>
    <property type="project" value="MTBBASE"/>
</dbReference>
<dbReference type="GO" id="GO:0010629">
    <property type="term" value="P:negative regulation of gene expression"/>
    <property type="evidence" value="ECO:0000314"/>
    <property type="project" value="MTBBASE"/>
</dbReference>
<dbReference type="GO" id="GO:0010628">
    <property type="term" value="P:positive regulation of gene expression"/>
    <property type="evidence" value="ECO:0000314"/>
    <property type="project" value="MTBBASE"/>
</dbReference>
<dbReference type="GO" id="GO:0009372">
    <property type="term" value="P:quorum sensing"/>
    <property type="evidence" value="ECO:0000304"/>
    <property type="project" value="UniProtKB"/>
</dbReference>
<dbReference type="GO" id="GO:0042127">
    <property type="term" value="P:regulation of cell population proliferation"/>
    <property type="evidence" value="ECO:0000314"/>
    <property type="project" value="MTBBASE"/>
</dbReference>
<dbReference type="CDD" id="cd13925">
    <property type="entry name" value="RPF"/>
    <property type="match status" value="1"/>
</dbReference>
<dbReference type="FunFam" id="1.10.530.10:FF:000015">
    <property type="entry name" value="Resuscitation-promoting factor RpfB"/>
    <property type="match status" value="1"/>
</dbReference>
<dbReference type="FunFam" id="2.20.230.10:FF:000003">
    <property type="entry name" value="Resuscitation-promoting factor RpfB"/>
    <property type="match status" value="1"/>
</dbReference>
<dbReference type="Gene3D" id="1.10.530.10">
    <property type="match status" value="1"/>
</dbReference>
<dbReference type="Gene3D" id="2.20.230.10">
    <property type="entry name" value="Resuscitation-promoting factor rpfb"/>
    <property type="match status" value="1"/>
</dbReference>
<dbReference type="InterPro" id="IPR007137">
    <property type="entry name" value="DUF348"/>
</dbReference>
<dbReference type="InterPro" id="IPR011098">
    <property type="entry name" value="G5_dom"/>
</dbReference>
<dbReference type="InterPro" id="IPR023346">
    <property type="entry name" value="Lysozyme-like_dom_sf"/>
</dbReference>
<dbReference type="InterPro" id="IPR051933">
    <property type="entry name" value="Resuscitation_pf_RpfB"/>
</dbReference>
<dbReference type="InterPro" id="IPR010618">
    <property type="entry name" value="RPF"/>
</dbReference>
<dbReference type="PANTHER" id="PTHR39160">
    <property type="entry name" value="CELL WALL-BINDING PROTEIN YOCH"/>
    <property type="match status" value="1"/>
</dbReference>
<dbReference type="PANTHER" id="PTHR39160:SF4">
    <property type="entry name" value="RESUSCITATION-PROMOTING FACTOR RPFB"/>
    <property type="match status" value="1"/>
</dbReference>
<dbReference type="Pfam" id="PF03990">
    <property type="entry name" value="DUF348"/>
    <property type="match status" value="3"/>
</dbReference>
<dbReference type="Pfam" id="PF07501">
    <property type="entry name" value="G5"/>
    <property type="match status" value="1"/>
</dbReference>
<dbReference type="Pfam" id="PF06737">
    <property type="entry name" value="Transglycosylas"/>
    <property type="match status" value="1"/>
</dbReference>
<dbReference type="SMART" id="SM01208">
    <property type="entry name" value="G5"/>
    <property type="match status" value="1"/>
</dbReference>
<dbReference type="SUPFAM" id="SSF53955">
    <property type="entry name" value="Lysozyme-like"/>
    <property type="match status" value="1"/>
</dbReference>
<dbReference type="PROSITE" id="PS51109">
    <property type="entry name" value="G5"/>
    <property type="match status" value="1"/>
</dbReference>
<dbReference type="PROSITE" id="PS51257">
    <property type="entry name" value="PROKAR_LIPOPROTEIN"/>
    <property type="match status" value="1"/>
</dbReference>
<reference evidence="15" key="1">
    <citation type="journal article" date="1998" name="Nature">
        <title>Deciphering the biology of Mycobacterium tuberculosis from the complete genome sequence.</title>
        <authorList>
            <person name="Cole S.T."/>
            <person name="Brosch R."/>
            <person name="Parkhill J."/>
            <person name="Garnier T."/>
            <person name="Churcher C.M."/>
            <person name="Harris D.E."/>
            <person name="Gordon S.V."/>
            <person name="Eiglmeier K."/>
            <person name="Gas S."/>
            <person name="Barry C.E. III"/>
            <person name="Tekaia F."/>
            <person name="Badcock K."/>
            <person name="Basham D."/>
            <person name="Brown D."/>
            <person name="Chillingworth T."/>
            <person name="Connor R."/>
            <person name="Davies R.M."/>
            <person name="Devlin K."/>
            <person name="Feltwell T."/>
            <person name="Gentles S."/>
            <person name="Hamlin N."/>
            <person name="Holroyd S."/>
            <person name="Hornsby T."/>
            <person name="Jagels K."/>
            <person name="Krogh A."/>
            <person name="McLean J."/>
            <person name="Moule S."/>
            <person name="Murphy L.D."/>
            <person name="Oliver S."/>
            <person name="Osborne J."/>
            <person name="Quail M.A."/>
            <person name="Rajandream M.A."/>
            <person name="Rogers J."/>
            <person name="Rutter S."/>
            <person name="Seeger K."/>
            <person name="Skelton S."/>
            <person name="Squares S."/>
            <person name="Squares R."/>
            <person name="Sulston J.E."/>
            <person name="Taylor K."/>
            <person name="Whitehead S."/>
            <person name="Barrell B.G."/>
        </authorList>
    </citation>
    <scope>NUCLEOTIDE SEQUENCE [LARGE SCALE GENOMIC DNA]</scope>
    <source>
        <strain>ATCC 25618 / H37Rv</strain>
    </source>
</reference>
<reference evidence="14" key="2">
    <citation type="submission" date="2017-03" db="EMBL/GenBank/DDBJ databases">
        <title>Comparative Study of Gene Sequence and Expression Profile of Mycobacterium tuberculosis Resuscitation-promoting Factors between Drug Susceptible and Multi-drug Resistant Strains and its Correlation to Drug Resistance.</title>
        <authorList>
            <person name="Pastor C.J.M."/>
        </authorList>
    </citation>
    <scope>NUCLEOTIDE SEQUENCE [GENOMIC DNA]</scope>
    <source>
        <strain>H37Rv</strain>
    </source>
</reference>
<reference key="3">
    <citation type="journal article" date="2002" name="Mol. Microbiol.">
        <title>A family of autocrine growth factors in Mycobacterium tuberculosis.</title>
        <authorList>
            <person name="Mukamolova G.V."/>
            <person name="Turapov O.A."/>
            <person name="Young D.I."/>
            <person name="Kaprelyants A.S."/>
            <person name="Kell D.B."/>
            <person name="Young M."/>
        </authorList>
    </citation>
    <scope>FUNCTION</scope>
    <scope>INDUCTION</scope>
    <source>
        <strain>ATCC 25618 / H37Rv</strain>
    </source>
</reference>
<reference key="4">
    <citation type="journal article" date="2003" name="Infect. Immun.">
        <title>Proteins of the Rpf family: immune cell reactivity and vaccination efficacy against tuberculosis in mice.</title>
        <authorList>
            <person name="Yeremeev V.V."/>
            <person name="Kondratieva T.K."/>
            <person name="Rubakova E.I."/>
            <person name="Petrovskaya S.N."/>
            <person name="Kazarian K.A."/>
            <person name="Telkov M.V."/>
            <person name="Biketov S.F."/>
            <person name="Kaprelyants A.S."/>
            <person name="Apt A.S."/>
        </authorList>
    </citation>
    <scope>BIOTECHNOLOGY</scope>
    <source>
        <strain>ATCC 25618 / H37Rv</strain>
    </source>
</reference>
<reference key="5">
    <citation type="journal article" date="2003" name="Tuberculosis">
        <title>Resuscitation factors from mycobacteria: homologs of Micrococcus luteus proteins.</title>
        <authorList>
            <person name="Zhu W."/>
            <person name="Plikaytis B.B."/>
            <person name="Shinnick T.M."/>
        </authorList>
    </citation>
    <scope>FUNCTION</scope>
    <source>
        <strain>ATCC 25618 / H37Rv</strain>
    </source>
</reference>
<reference key="6">
    <citation type="journal article" date="2004" name="Tuberculosis">
        <title>Global expression profiling of strains harbouring null mutations reveals that the five rpf-like genes of Mycobacterium tuberculosis show functional redundancy.</title>
        <authorList>
            <person name="Downing K.J."/>
            <person name="Betts J.C."/>
            <person name="Young D.I."/>
            <person name="McAdam R.A."/>
            <person name="Kelly F."/>
            <person name="Young M."/>
            <person name="Mizrahi V."/>
        </authorList>
    </citation>
    <scope>DISRUPTION PHENOTYPE</scope>
    <source>
        <strain>ATCC 25618 / H37Rv</strain>
    </source>
</reference>
<reference key="7">
    <citation type="journal article" date="2007" name="Mol. Microbiol.">
        <title>A partner for the resuscitation-promoting factors of Mycobacterium tuberculosis.</title>
        <authorList>
            <person name="Hett E.C."/>
            <person name="Chao M.C."/>
            <person name="Steyn A.J."/>
            <person name="Fortune S.M."/>
            <person name="Deng L.L."/>
            <person name="Rubin E.J."/>
        </authorList>
    </citation>
    <scope>INTERACTION WITH RIPA</scope>
    <scope>SUBCELLULAR LOCATION</scope>
    <source>
        <strain>ATCC 25618 / H37Rv</strain>
    </source>
</reference>
<reference key="8">
    <citation type="journal article" date="2008" name="Mol. Microbiol.">
        <title>The resuscitation-promoting factors of Mycobacterium tuberculosis are required for virulence and resuscitation from dormancy but are collectively dispensable for growth in vitro.</title>
        <authorList>
            <person name="Kana B.D."/>
            <person name="Gordhan B.G."/>
            <person name="Downing K.J."/>
            <person name="Sung N."/>
            <person name="Vostroktunova G."/>
            <person name="Machowski E.E."/>
            <person name="Tsenova L."/>
            <person name="Young M."/>
            <person name="Kaprelyants A."/>
            <person name="Kaplan G."/>
            <person name="Mizrahi V."/>
        </authorList>
    </citation>
    <scope>DISRUPTION PHENOTYPE</scope>
    <source>
        <strain>ATCC 25618 / H37Rv</strain>
    </source>
</reference>
<reference key="9">
    <citation type="journal article" date="2008" name="PLoS Pathog.">
        <title>A mycobacterial enzyme essential for cell division synergizes with resuscitation-promoting factor.</title>
        <authorList>
            <person name="Hett E.C."/>
            <person name="Chao M.C."/>
            <person name="Deng L.L."/>
            <person name="Rubin E.J."/>
        </authorList>
    </citation>
    <scope>FUNCTION IN CELL DIVISION</scope>
    <source>
        <strain>ATCC 25618 / H37Rv</strain>
    </source>
</reference>
<reference key="10">
    <citation type="journal article" date="2009" name="PLoS ONE">
        <title>Finding of the low molecular weight inhibitors of resuscitation promoting factor enzymatic and resuscitation activity.</title>
        <authorList>
            <person name="Demina G.R."/>
            <person name="Makarov V.A."/>
            <person name="Nikitushkin V.D."/>
            <person name="Ryabova O.B."/>
            <person name="Vostroknutova G.N."/>
            <person name="Salina E.G."/>
            <person name="Shleeva M.O."/>
            <person name="Goncharenko A.V."/>
            <person name="Kaprelyants A.S."/>
        </authorList>
    </citation>
    <scope>FUNCTION AS A MURALYTIC ENZYME</scope>
    <scope>ACTIVITY REGULATION</scope>
    <source>
        <strain>ATCC 25618 / H37Rv</strain>
    </source>
</reference>
<reference key="11">
    <citation type="journal article" date="2008" name="BMC Syst. Biol.">
        <title>targetTB: a target identification pipeline for Mycobacterium tuberculosis through an interactome, reactome and genome-scale structural analysis.</title>
        <authorList>
            <person name="Raman K."/>
            <person name="Yeturu K."/>
            <person name="Chandra N."/>
        </authorList>
    </citation>
    <scope>IDENTIFICATION AS A DRUG TARGET [LARGE SCALE ANALYSIS]</scope>
</reference>
<reference key="12">
    <citation type="journal article" date="2010" name="PLoS Pathog.">
        <title>Interaction and modulation of two antagonistic cell wall enzymes of mycobacteria.</title>
        <authorList>
            <person name="Hett E.C."/>
            <person name="Chao M.C."/>
            <person name="Rubin E.J."/>
        </authorList>
    </citation>
    <scope>ACTIVITY REGULATION</scope>
    <source>
        <strain>ATCC 25618 / H37Rv</strain>
    </source>
</reference>
<reference key="13">
    <citation type="journal article" date="2012" name="Microbes Infect.">
        <title>Potential of Mycobacterium tuberculosis resuscitation-promoting factors as antigens in novel tuberculosis sub-unit vaccines.</title>
        <authorList>
            <person name="Romano M."/>
            <person name="Aryan E."/>
            <person name="Korf H."/>
            <person name="Bruffaerts N."/>
            <person name="Franken C.L."/>
            <person name="Ottenhoff T.H."/>
            <person name="Huygen K."/>
        </authorList>
    </citation>
    <scope>BIOTECHNOLOGY</scope>
    <source>
        <strain>ATCC 25618 / H37Rv</strain>
    </source>
</reference>
<reference evidence="16" key="14">
    <citation type="journal article" date="2005" name="Nat. Struct. Mol. Biol.">
        <title>The structure of a resuscitation-promoting factor domain from Mycobacterium tuberculosis shows homology to lysozymes.</title>
        <authorList>
            <person name="Cohen-Gonsaud M."/>
            <person name="Barthe P."/>
            <person name="Bagneris C."/>
            <person name="Henderson B."/>
            <person name="Ward J."/>
            <person name="Roumestand C."/>
            <person name="Keep N.H."/>
        </authorList>
    </citation>
    <scope>STRUCTURE BY NMR OF 255-362</scope>
    <scope>DISULFIDE BOND</scope>
    <scope>BINDING TO TRI-NAG</scope>
    <source>
        <strain>ATCC 25618 / H37Rv</strain>
    </source>
</reference>
<reference evidence="17" key="15">
    <citation type="journal article" date="2009" name="J. Mol. Biol.">
        <title>Crystal structure of the resuscitation-promoting factor (DeltaDUF)RpfB from M. tuberculosis.</title>
        <authorList>
            <person name="Ruggiero A."/>
            <person name="Tizzano B."/>
            <person name="Pedone E."/>
            <person name="Pedone C."/>
            <person name="Wilmanns M."/>
            <person name="Berisio R."/>
        </authorList>
    </citation>
    <scope>X-RAY CRYSTALLOGRAPHY (1.83 ANGSTROMS) OF 194-362</scope>
    <scope>SUBUNIT</scope>
    <scope>DISULFIDE BOND</scope>
    <source>
        <strain>ATCC 25618 / H37Rv</strain>
    </source>
</reference>
<sequence>MLRLVVGALLLVLAFAGGYAVAACKTVTLTVDGTAMRVTTMKSRVIDIVEENGFSVDDRDDLYPAAGVQVHDADTIVLRRSRPLQISLDGHDAKQVWTTASTVDEALAQLAMTDTAPAAASRASRVPLSGMALPVVSAKTVQLNDGGLVRTVHLPAPNVAGLLSAAGVPLLQSDHVVPAATAPIVEGMQIQVTRNRIKKVTERLPLPPNARRVEDPEMNMSREVVEDPGVPGTQDVTFAVAEVNGVETGRLPVANVVVTPAHEAVVRVGTKPGTEVPPVIDGSIWDAIAGCEAGGNWAINTGNGYYGGVQFDQGTWEANGGLRYAPRADLATREEQIAVAEVTRLRQGWGAWPVCAARAGAR</sequence>